<protein>
    <recommendedName>
        <fullName>Putative uncharacterized protein YNL043C</fullName>
    </recommendedName>
</protein>
<proteinExistence type="uncertain"/>
<accession>P53957</accession>
<sequence>MTPFPNTCRSVQTVSSSNTVSMGFSINDACPKTLTAEAPINHSKVEIGEAKKPIGTATQTSPVYSWLVLKEPNGVTSSSPFSLFIPTIPATTRTITKSSNKFVNNV</sequence>
<reference key="1">
    <citation type="journal article" date="1996" name="Yeast">
        <title>The sequence of 12.8 kb from the left arm of chromosome XIV reveals a sigma element, a pro-tRNA and six complete open reading frames, one of which encodes a protein similar to the human leukotriene A4 hydrolase.</title>
        <authorList>
            <person name="Nasr F."/>
            <person name="Becam A.-M."/>
            <person name="Herbert C.J."/>
        </authorList>
    </citation>
    <scope>NUCLEOTIDE SEQUENCE [GENOMIC DNA]</scope>
    <source>
        <strain>ATCC 96604 / S288c / FY1679</strain>
    </source>
</reference>
<reference key="2">
    <citation type="journal article" date="1997" name="Nature">
        <title>The nucleotide sequence of Saccharomyces cerevisiae chromosome XIV and its evolutionary implications.</title>
        <authorList>
            <person name="Philippsen P."/>
            <person name="Kleine K."/>
            <person name="Poehlmann R."/>
            <person name="Duesterhoeft A."/>
            <person name="Hamberg K."/>
            <person name="Hegemann J.H."/>
            <person name="Obermaier B."/>
            <person name="Urrestarazu L.A."/>
            <person name="Aert R."/>
            <person name="Albermann K."/>
            <person name="Altmann R."/>
            <person name="Andre B."/>
            <person name="Baladron V."/>
            <person name="Ballesta J.P.G."/>
            <person name="Becam A.-M."/>
            <person name="Beinhauer J.D."/>
            <person name="Boskovic J."/>
            <person name="Buitrago M.J."/>
            <person name="Bussereau F."/>
            <person name="Coster F."/>
            <person name="Crouzet M."/>
            <person name="D'Angelo M."/>
            <person name="Dal Pero F."/>
            <person name="De Antoni A."/>
            <person name="del Rey F."/>
            <person name="Doignon F."/>
            <person name="Domdey H."/>
            <person name="Dubois E."/>
            <person name="Fiedler T.A."/>
            <person name="Fleig U."/>
            <person name="Floeth M."/>
            <person name="Fritz C."/>
            <person name="Gaillardin C."/>
            <person name="Garcia-Cantalejo J.M."/>
            <person name="Glansdorff N."/>
            <person name="Goffeau A."/>
            <person name="Gueldener U."/>
            <person name="Herbert C.J."/>
            <person name="Heumann K."/>
            <person name="Heuss-Neitzel D."/>
            <person name="Hilbert H."/>
            <person name="Hinni K."/>
            <person name="Iraqui Houssaini I."/>
            <person name="Jacquet M."/>
            <person name="Jimenez A."/>
            <person name="Jonniaux J.-L."/>
            <person name="Karpfinger-Hartl L."/>
            <person name="Lanfranchi G."/>
            <person name="Lepingle A."/>
            <person name="Levesque H."/>
            <person name="Lyck R."/>
            <person name="Maftahi M."/>
            <person name="Mallet L."/>
            <person name="Maurer C.T.C."/>
            <person name="Messenguy F."/>
            <person name="Mewes H.-W."/>
            <person name="Moestl D."/>
            <person name="Nasr F."/>
            <person name="Nicaud J.-M."/>
            <person name="Niedenthal R.K."/>
            <person name="Pandolfo D."/>
            <person name="Pierard A."/>
            <person name="Piravandi E."/>
            <person name="Planta R.J."/>
            <person name="Pohl T.M."/>
            <person name="Purnelle B."/>
            <person name="Rebischung C."/>
            <person name="Remacha M.A."/>
            <person name="Revuelta J.L."/>
            <person name="Rinke M."/>
            <person name="Saiz J.E."/>
            <person name="Sartorello F."/>
            <person name="Scherens B."/>
            <person name="Sen-Gupta M."/>
            <person name="Soler-Mira A."/>
            <person name="Urbanus J.H.M."/>
            <person name="Valle G."/>
            <person name="Van Dyck L."/>
            <person name="Verhasselt P."/>
            <person name="Vierendeels F."/>
            <person name="Vissers S."/>
            <person name="Voet M."/>
            <person name="Volckaert G."/>
            <person name="Wach A."/>
            <person name="Wambutt R."/>
            <person name="Wedler H."/>
            <person name="Zollner A."/>
            <person name="Hani J."/>
        </authorList>
    </citation>
    <scope>NUCLEOTIDE SEQUENCE [LARGE SCALE GENOMIC DNA]</scope>
    <source>
        <strain>ATCC 204508 / S288c</strain>
    </source>
</reference>
<reference key="3">
    <citation type="journal article" date="2014" name="G3 (Bethesda)">
        <title>The reference genome sequence of Saccharomyces cerevisiae: Then and now.</title>
        <authorList>
            <person name="Engel S.R."/>
            <person name="Dietrich F.S."/>
            <person name="Fisk D.G."/>
            <person name="Binkley G."/>
            <person name="Balakrishnan R."/>
            <person name="Costanzo M.C."/>
            <person name="Dwight S.S."/>
            <person name="Hitz B.C."/>
            <person name="Karra K."/>
            <person name="Nash R.S."/>
            <person name="Weng S."/>
            <person name="Wong E.D."/>
            <person name="Lloyd P."/>
            <person name="Skrzypek M.S."/>
            <person name="Miyasato S.R."/>
            <person name="Simison M."/>
            <person name="Cherry J.M."/>
        </authorList>
    </citation>
    <scope>GENOME REANNOTATION</scope>
    <source>
        <strain>ATCC 204508 / S288c</strain>
    </source>
</reference>
<reference key="4">
    <citation type="journal article" date="2007" name="Genome Res.">
        <title>Approaching a complete repository of sequence-verified protein-encoding clones for Saccharomyces cerevisiae.</title>
        <authorList>
            <person name="Hu Y."/>
            <person name="Rolfs A."/>
            <person name="Bhullar B."/>
            <person name="Murthy T.V.S."/>
            <person name="Zhu C."/>
            <person name="Berger M.F."/>
            <person name="Camargo A.A."/>
            <person name="Kelley F."/>
            <person name="McCarron S."/>
            <person name="Jepson D."/>
            <person name="Richardson A."/>
            <person name="Raphael J."/>
            <person name="Moreira D."/>
            <person name="Taycher E."/>
            <person name="Zuo D."/>
            <person name="Mohr S."/>
            <person name="Kane M.F."/>
            <person name="Williamson J."/>
            <person name="Simpson A.J.G."/>
            <person name="Bulyk M.L."/>
            <person name="Harlow E."/>
            <person name="Marsischky G."/>
            <person name="Kolodner R.D."/>
            <person name="LaBaer J."/>
        </authorList>
    </citation>
    <scope>NUCLEOTIDE SEQUENCE [GENOMIC DNA]</scope>
    <source>
        <strain>ATCC 204508 / S288c</strain>
    </source>
</reference>
<gene>
    <name type="ordered locus">YNL043C</name>
    <name type="ORF">N2655</name>
</gene>
<comment type="miscellaneous">
    <text evidence="1">Almost completely overlaps YIP3.</text>
</comment>
<comment type="caution">
    <text evidence="2">Product of a dubious gene prediction unlikely to encode a functional protein. Because of that it is not part of the S.cerevisiae S288c complete/reference proteome set.</text>
</comment>
<dbReference type="EMBL" id="X94547">
    <property type="protein sequence ID" value="CAA64239.1"/>
    <property type="molecule type" value="Genomic_DNA"/>
</dbReference>
<dbReference type="EMBL" id="Z71320">
    <property type="protein sequence ID" value="CAA95910.1"/>
    <property type="molecule type" value="Genomic_DNA"/>
</dbReference>
<dbReference type="EMBL" id="AY693310">
    <property type="protein sequence ID" value="AAT93329.1"/>
    <property type="molecule type" value="Genomic_DNA"/>
</dbReference>
<dbReference type="PIR" id="S61101">
    <property type="entry name" value="S61101"/>
</dbReference>
<dbReference type="IntAct" id="P53957">
    <property type="interactions" value="1"/>
</dbReference>
<dbReference type="STRING" id="4932.YNL043C"/>
<dbReference type="PaxDb" id="4932-YNL043C"/>
<dbReference type="EnsemblFungi" id="YNL043C_mRNA">
    <property type="protein sequence ID" value="YNL043C"/>
    <property type="gene ID" value="YNL043C"/>
</dbReference>
<dbReference type="AGR" id="SGD:S000004988"/>
<dbReference type="SGD" id="S000004988">
    <property type="gene designation" value="YNL043C"/>
</dbReference>
<dbReference type="HOGENOM" id="CLU_2225272_0_0_1"/>
<dbReference type="ChiTaRS" id="YNL043C">
    <property type="organism name" value="yeast"/>
</dbReference>
<organism>
    <name type="scientific">Saccharomyces cerevisiae (strain ATCC 204508 / S288c)</name>
    <name type="common">Baker's yeast</name>
    <dbReference type="NCBI Taxonomy" id="559292"/>
    <lineage>
        <taxon>Eukaryota</taxon>
        <taxon>Fungi</taxon>
        <taxon>Dikarya</taxon>
        <taxon>Ascomycota</taxon>
        <taxon>Saccharomycotina</taxon>
        <taxon>Saccharomycetes</taxon>
        <taxon>Saccharomycetales</taxon>
        <taxon>Saccharomycetaceae</taxon>
        <taxon>Saccharomyces</taxon>
    </lineage>
</organism>
<evidence type="ECO:0000305" key="1"/>
<evidence type="ECO:0000305" key="2">
    <source>
    </source>
</evidence>
<feature type="chain" id="PRO_0000203455" description="Putative uncharacterized protein YNL043C">
    <location>
        <begin position="1"/>
        <end position="106"/>
    </location>
</feature>
<name>YNE3_YEAST</name>